<evidence type="ECO:0000250" key="1"/>
<evidence type="ECO:0000250" key="2">
    <source>
        <dbReference type="UniProtKB" id="P50120"/>
    </source>
</evidence>
<evidence type="ECO:0000305" key="3"/>
<dbReference type="EMBL" id="X77639">
    <property type="protein sequence ID" value="CAA54729.1"/>
    <property type="molecule type" value="mRNA"/>
</dbReference>
<dbReference type="PIR" id="S45378">
    <property type="entry name" value="S45378"/>
</dbReference>
<dbReference type="RefSeq" id="NP_999616.1">
    <property type="nucleotide sequence ID" value="NM_214451.1"/>
</dbReference>
<dbReference type="SMR" id="P50121"/>
<dbReference type="FunCoup" id="P50121">
    <property type="interactions" value="951"/>
</dbReference>
<dbReference type="STRING" id="9823.ENSSSCP00000071182"/>
<dbReference type="PaxDb" id="9823-ENSSSCP00000012433"/>
<dbReference type="PeptideAtlas" id="P50121"/>
<dbReference type="GeneID" id="407611"/>
<dbReference type="KEGG" id="ssc:407611"/>
<dbReference type="CTD" id="5948"/>
<dbReference type="eggNOG" id="KOG4015">
    <property type="taxonomic scope" value="Eukaryota"/>
</dbReference>
<dbReference type="InParanoid" id="P50121"/>
<dbReference type="OrthoDB" id="354351at2759"/>
<dbReference type="Proteomes" id="UP000008227">
    <property type="component" value="Unplaced"/>
</dbReference>
<dbReference type="Proteomes" id="UP000314985">
    <property type="component" value="Unplaced"/>
</dbReference>
<dbReference type="Proteomes" id="UP000694570">
    <property type="component" value="Unplaced"/>
</dbReference>
<dbReference type="Proteomes" id="UP000694571">
    <property type="component" value="Unplaced"/>
</dbReference>
<dbReference type="Proteomes" id="UP000694720">
    <property type="component" value="Unplaced"/>
</dbReference>
<dbReference type="Proteomes" id="UP000694722">
    <property type="component" value="Unplaced"/>
</dbReference>
<dbReference type="Proteomes" id="UP000694723">
    <property type="component" value="Unplaced"/>
</dbReference>
<dbReference type="Proteomes" id="UP000694724">
    <property type="component" value="Unplaced"/>
</dbReference>
<dbReference type="Proteomes" id="UP000694725">
    <property type="component" value="Unplaced"/>
</dbReference>
<dbReference type="Proteomes" id="UP000694726">
    <property type="component" value="Unplaced"/>
</dbReference>
<dbReference type="Proteomes" id="UP000694727">
    <property type="component" value="Unplaced"/>
</dbReference>
<dbReference type="Proteomes" id="UP000694728">
    <property type="component" value="Unplaced"/>
</dbReference>
<dbReference type="GO" id="GO:0005829">
    <property type="term" value="C:cytosol"/>
    <property type="evidence" value="ECO:0000318"/>
    <property type="project" value="GO_Central"/>
</dbReference>
<dbReference type="GO" id="GO:0005634">
    <property type="term" value="C:nucleus"/>
    <property type="evidence" value="ECO:0000318"/>
    <property type="project" value="GO_Central"/>
</dbReference>
<dbReference type="GO" id="GO:0005504">
    <property type="term" value="F:fatty acid binding"/>
    <property type="evidence" value="ECO:0000318"/>
    <property type="project" value="GO_Central"/>
</dbReference>
<dbReference type="GO" id="GO:0016918">
    <property type="term" value="F:retinal binding"/>
    <property type="evidence" value="ECO:0007669"/>
    <property type="project" value="UniProtKB-KW"/>
</dbReference>
<dbReference type="GO" id="GO:0019841">
    <property type="term" value="F:retinol binding"/>
    <property type="evidence" value="ECO:0007669"/>
    <property type="project" value="UniProtKB-KW"/>
</dbReference>
<dbReference type="GO" id="GO:0015908">
    <property type="term" value="P:fatty acid transport"/>
    <property type="evidence" value="ECO:0000318"/>
    <property type="project" value="GO_Central"/>
</dbReference>
<dbReference type="CDD" id="cd19463">
    <property type="entry name" value="CRBP2"/>
    <property type="match status" value="1"/>
</dbReference>
<dbReference type="FunFam" id="2.40.128.20:FF:000001">
    <property type="entry name" value="Fatty acid-binding protein, adipocyte"/>
    <property type="match status" value="1"/>
</dbReference>
<dbReference type="Gene3D" id="2.40.128.20">
    <property type="match status" value="1"/>
</dbReference>
<dbReference type="InterPro" id="IPR012674">
    <property type="entry name" value="Calycin"/>
</dbReference>
<dbReference type="InterPro" id="IPR000463">
    <property type="entry name" value="Fatty_acid-bd"/>
</dbReference>
<dbReference type="InterPro" id="IPR031259">
    <property type="entry name" value="ILBP"/>
</dbReference>
<dbReference type="InterPro" id="IPR000566">
    <property type="entry name" value="Lipocln_cytosolic_FA-bd_dom"/>
</dbReference>
<dbReference type="PANTHER" id="PTHR11955">
    <property type="entry name" value="FATTY ACID BINDING PROTEIN"/>
    <property type="match status" value="1"/>
</dbReference>
<dbReference type="Pfam" id="PF00061">
    <property type="entry name" value="Lipocalin"/>
    <property type="match status" value="1"/>
</dbReference>
<dbReference type="PRINTS" id="PR00178">
    <property type="entry name" value="FATTYACIDBP"/>
</dbReference>
<dbReference type="SUPFAM" id="SSF50814">
    <property type="entry name" value="Lipocalins"/>
    <property type="match status" value="1"/>
</dbReference>
<dbReference type="PROSITE" id="PS00214">
    <property type="entry name" value="FABP"/>
    <property type="match status" value="1"/>
</dbReference>
<protein>
    <recommendedName>
        <fullName>Retinol-binding protein 2</fullName>
    </recommendedName>
    <alternativeName>
        <fullName>Cellular retinol-binding protein II</fullName>
        <shortName>CRBP-II</shortName>
    </alternativeName>
</protein>
<gene>
    <name type="primary">RBP2</name>
</gene>
<sequence length="134" mass="15638">MTRDQNGTWEMESNDNFEGYMKALDIDFATRKIAVALTQTKIIEQDGDKFKTKTNSTFRNYDLDFTVGVEFDEYTKGLDNRNVKTLIIWEGDALVCVQKGEKENRGWKQWVEGDKLYLELTCGDQVCRQVFKKK</sequence>
<feature type="chain" id="PRO_0000067397" description="Retinol-binding protein 2">
    <location>
        <begin position="1"/>
        <end position="134"/>
    </location>
</feature>
<feature type="binding site" evidence="2">
    <location>
        <position position="41"/>
    </location>
    <ligand>
        <name>all-trans-retinol</name>
        <dbReference type="ChEBI" id="CHEBI:17336"/>
    </ligand>
</feature>
<feature type="binding site" evidence="2">
    <location>
        <position position="109"/>
    </location>
    <ligand>
        <name>all-trans-retinol</name>
        <dbReference type="ChEBI" id="CHEBI:17336"/>
    </ligand>
</feature>
<accession>P50121</accession>
<reference key="1">
    <citation type="journal article" date="1993" name="J. Nutr. Biochem.">
        <title>Expression of differentiated functions in the developing porcine small intestine.</title>
        <authorList>
            <person name="Perozzi G."/>
            <person name="Baril D."/>
            <person name="Murgia C."/>
            <person name="Kelly D."/>
            <person name="Begbie R."/>
            <person name="King T.P."/>
        </authorList>
        <dbReference type="AGRICOLA" id="IND20415199"/>
    </citation>
    <scope>NUCLEOTIDE SEQUENCE [MRNA]</scope>
    <source>
        <strain>Large white X Landrace</strain>
        <tissue>Jejunum</tissue>
    </source>
</reference>
<name>RET2_PIG</name>
<keyword id="KW-0963">Cytoplasm</keyword>
<keyword id="KW-1185">Reference proteome</keyword>
<keyword id="KW-0683">Retinol-binding</keyword>
<keyword id="KW-0813">Transport</keyword>
<keyword id="KW-0845">Vitamin A</keyword>
<organism>
    <name type="scientific">Sus scrofa</name>
    <name type="common">Pig</name>
    <dbReference type="NCBI Taxonomy" id="9823"/>
    <lineage>
        <taxon>Eukaryota</taxon>
        <taxon>Metazoa</taxon>
        <taxon>Chordata</taxon>
        <taxon>Craniata</taxon>
        <taxon>Vertebrata</taxon>
        <taxon>Euteleostomi</taxon>
        <taxon>Mammalia</taxon>
        <taxon>Eutheria</taxon>
        <taxon>Laurasiatheria</taxon>
        <taxon>Artiodactyla</taxon>
        <taxon>Suina</taxon>
        <taxon>Suidae</taxon>
        <taxon>Sus</taxon>
    </lineage>
</organism>
<proteinExistence type="evidence at transcript level"/>
<comment type="function">
    <text>Intracellular transport of retinol.</text>
</comment>
<comment type="subcellular location">
    <subcellularLocation>
        <location>Cytoplasm</location>
    </subcellularLocation>
</comment>
<comment type="domain">
    <text evidence="1">Forms a beta-barrel structure that accommodates hydrophobic ligands in its interior.</text>
</comment>
<comment type="similarity">
    <text evidence="3">Belongs to the calycin superfamily. Fatty-acid binding protein (FABP) family.</text>
</comment>